<evidence type="ECO:0000255" key="1">
    <source>
        <dbReference type="HAMAP-Rule" id="MF_01956"/>
    </source>
</evidence>
<keyword id="KW-0963">Cytoplasm</keyword>
<keyword id="KW-0227">DNA damage</keyword>
<keyword id="KW-0228">DNA excision</keyword>
<keyword id="KW-0234">DNA repair</keyword>
<keyword id="KW-0238">DNA-binding</keyword>
<keyword id="KW-0378">Hydrolase</keyword>
<sequence>MVEDILAPGLRVVFCGINPGLSSAGTGFPFAHPANRFWKVIYQAGFTDRQLKPQEAQHLLDYRCGVTKLVDRPTVQASEVSKQELHAGGRKLIEKIEDYQPQALAILGKQAYEQGFSQRGAQWGKQTLTIGSTQIWVLPNPSGLSRVSLEKLVEAYRELDQALVVRGR</sequence>
<proteinExistence type="inferred from homology"/>
<reference key="1">
    <citation type="journal article" date="2008" name="J. Bacteriol.">
        <title>The pangenome structure of Escherichia coli: comparative genomic analysis of E. coli commensal and pathogenic isolates.</title>
        <authorList>
            <person name="Rasko D.A."/>
            <person name="Rosovitz M.J."/>
            <person name="Myers G.S.A."/>
            <person name="Mongodin E.F."/>
            <person name="Fricke W.F."/>
            <person name="Gajer P."/>
            <person name="Crabtree J."/>
            <person name="Sebaihia M."/>
            <person name="Thomson N.R."/>
            <person name="Chaudhuri R."/>
            <person name="Henderson I.R."/>
            <person name="Sperandio V."/>
            <person name="Ravel J."/>
        </authorList>
    </citation>
    <scope>NUCLEOTIDE SEQUENCE [LARGE SCALE GENOMIC DNA]</scope>
    <source>
        <strain>HS</strain>
    </source>
</reference>
<dbReference type="EC" id="3.2.2.28" evidence="1"/>
<dbReference type="EMBL" id="CP000802">
    <property type="protein sequence ID" value="ABV07479.1"/>
    <property type="molecule type" value="Genomic_DNA"/>
</dbReference>
<dbReference type="RefSeq" id="WP_000228941.1">
    <property type="nucleotide sequence ID" value="NC_009800.1"/>
</dbReference>
<dbReference type="SMR" id="A8A4M5"/>
<dbReference type="KEGG" id="ecx:EcHS_A3249"/>
<dbReference type="HOGENOM" id="CLU_042829_3_1_6"/>
<dbReference type="GO" id="GO:0005737">
    <property type="term" value="C:cytoplasm"/>
    <property type="evidence" value="ECO:0007669"/>
    <property type="project" value="UniProtKB-SubCell"/>
</dbReference>
<dbReference type="GO" id="GO:0003677">
    <property type="term" value="F:DNA binding"/>
    <property type="evidence" value="ECO:0007669"/>
    <property type="project" value="UniProtKB-KW"/>
</dbReference>
<dbReference type="GO" id="GO:0008263">
    <property type="term" value="F:pyrimidine-specific mismatch base pair DNA N-glycosylase activity"/>
    <property type="evidence" value="ECO:0007669"/>
    <property type="project" value="UniProtKB-UniRule"/>
</dbReference>
<dbReference type="GO" id="GO:0004844">
    <property type="term" value="F:uracil DNA N-glycosylase activity"/>
    <property type="evidence" value="ECO:0007669"/>
    <property type="project" value="TreeGrafter"/>
</dbReference>
<dbReference type="GO" id="GO:0006285">
    <property type="term" value="P:base-excision repair, AP site formation"/>
    <property type="evidence" value="ECO:0007669"/>
    <property type="project" value="UniProtKB-UniRule"/>
</dbReference>
<dbReference type="CDD" id="cd10028">
    <property type="entry name" value="UDG-F2_TDG_MUG"/>
    <property type="match status" value="1"/>
</dbReference>
<dbReference type="FunFam" id="3.40.470.10:FF:000003">
    <property type="entry name" value="G/U mismatch-specific DNA glycosylase"/>
    <property type="match status" value="1"/>
</dbReference>
<dbReference type="Gene3D" id="3.40.470.10">
    <property type="entry name" value="Uracil-DNA glycosylase-like domain"/>
    <property type="match status" value="1"/>
</dbReference>
<dbReference type="HAMAP" id="MF_01956">
    <property type="entry name" value="MUG"/>
    <property type="match status" value="1"/>
</dbReference>
<dbReference type="InterPro" id="IPR015637">
    <property type="entry name" value="MUG/TDG"/>
</dbReference>
<dbReference type="InterPro" id="IPR023502">
    <property type="entry name" value="MUG_bact"/>
</dbReference>
<dbReference type="InterPro" id="IPR005122">
    <property type="entry name" value="Uracil-DNA_glycosylase-like"/>
</dbReference>
<dbReference type="InterPro" id="IPR036895">
    <property type="entry name" value="Uracil-DNA_glycosylase-like_sf"/>
</dbReference>
<dbReference type="NCBIfam" id="NF007570">
    <property type="entry name" value="PRK10201.1"/>
    <property type="match status" value="1"/>
</dbReference>
<dbReference type="PANTHER" id="PTHR12159">
    <property type="entry name" value="G/T AND G/U MISMATCH-SPECIFIC DNA GLYCOSYLASE"/>
    <property type="match status" value="1"/>
</dbReference>
<dbReference type="PANTHER" id="PTHR12159:SF9">
    <property type="entry name" value="G_T MISMATCH-SPECIFIC THYMINE DNA GLYCOSYLASE"/>
    <property type="match status" value="1"/>
</dbReference>
<dbReference type="Pfam" id="PF03167">
    <property type="entry name" value="UDG"/>
    <property type="match status" value="1"/>
</dbReference>
<dbReference type="SUPFAM" id="SSF52141">
    <property type="entry name" value="Uracil-DNA glycosylase-like"/>
    <property type="match status" value="1"/>
</dbReference>
<organism>
    <name type="scientific">Escherichia coli O9:H4 (strain HS)</name>
    <dbReference type="NCBI Taxonomy" id="331112"/>
    <lineage>
        <taxon>Bacteria</taxon>
        <taxon>Pseudomonadati</taxon>
        <taxon>Pseudomonadota</taxon>
        <taxon>Gammaproteobacteria</taxon>
        <taxon>Enterobacterales</taxon>
        <taxon>Enterobacteriaceae</taxon>
        <taxon>Escherichia</taxon>
    </lineage>
</organism>
<protein>
    <recommendedName>
        <fullName evidence="1">G/U mismatch-specific DNA glycosylase</fullName>
        <ecNumber evidence="1">3.2.2.28</ecNumber>
    </recommendedName>
    <alternativeName>
        <fullName evidence="1">Double-strand-specific uracil glycosylase</fullName>
    </alternativeName>
    <alternativeName>
        <fullName evidence="1">Mismatch-specific uracil DNA-glycosylase</fullName>
        <shortName evidence="1">MUG</shortName>
    </alternativeName>
</protein>
<feature type="chain" id="PRO_1000070788" description="G/U mismatch-specific DNA glycosylase">
    <location>
        <begin position="1"/>
        <end position="168"/>
    </location>
</feature>
<comment type="function">
    <text evidence="1">Excises ethenocytosine and uracil, which can arise by alkylation or deamination of cytosine, respectively, from the corresponding mispairs with guanine in ds-DNA. It is capable of hydrolyzing the carbon-nitrogen bond between the sugar-phosphate backbone of the DNA and the mispaired base. The complementary strand guanine functions in substrate recognition. Required for DNA damage lesion repair in stationary-phase cells.</text>
</comment>
<comment type="catalytic activity">
    <reaction evidence="1">
        <text>Specifically hydrolyzes mismatched double-stranded DNA and polynucleotides, releasing free uracil.</text>
        <dbReference type="EC" id="3.2.2.28"/>
    </reaction>
</comment>
<comment type="subunit">
    <text evidence="1">Binds DNA as a monomer.</text>
</comment>
<comment type="subcellular location">
    <subcellularLocation>
        <location evidence="1">Cytoplasm</location>
    </subcellularLocation>
</comment>
<comment type="similarity">
    <text evidence="1">Belongs to the uracil-DNA glycosylase (UDG) superfamily. TDG/mug family.</text>
</comment>
<name>MUG_ECOHS</name>
<accession>A8A4M5</accession>
<gene>
    <name evidence="1" type="primary">mug</name>
    <name type="ordered locus">EcHS_A3249</name>
</gene>